<evidence type="ECO:0000250" key="1">
    <source>
        <dbReference type="UniProtKB" id="D5ARP7"/>
    </source>
</evidence>
<evidence type="ECO:0000250" key="2">
    <source>
        <dbReference type="UniProtKB" id="D9IA45"/>
    </source>
</evidence>
<evidence type="ECO:0000250" key="3">
    <source>
        <dbReference type="UniProtKB" id="Q3J015"/>
    </source>
</evidence>
<evidence type="ECO:0000250" key="4">
    <source>
        <dbReference type="UniProtKB" id="Q52689"/>
    </source>
</evidence>
<evidence type="ECO:0000250" key="5">
    <source>
        <dbReference type="UniProtKB" id="Q8KS19"/>
    </source>
</evidence>
<evidence type="ECO:0000255" key="6"/>
<evidence type="ECO:0000255" key="7">
    <source>
        <dbReference type="PROSITE-ProRule" id="PRU00433"/>
    </source>
</evidence>
<evidence type="ECO:0000269" key="8">
    <source>
    </source>
</evidence>
<evidence type="ECO:0000269" key="9">
    <source>
    </source>
</evidence>
<evidence type="ECO:0000305" key="10"/>
<evidence type="ECO:0000312" key="11">
    <source>
        <dbReference type="EMBL" id="AAW66135.1"/>
    </source>
</evidence>
<gene>
    <name evidence="11" type="primary">ccoP</name>
</gene>
<sequence>MSDFFNSGWSLYVAGITVVSLIFCLVVLIVASRRKVMADDNTTGHVWDEDLQELNNPLPRWWAGLFLVTIAFAVIYLALYPGLGSNKGTLDWTSTGQHSAEMEKARAQMAPLYAKFVSQPAEALAKDPQAMAIGERLFANNCAQCHGADARGSKGFPNLTDNDWLHGGTHDKIKETITGGRVGNMPPMAAAVGTPEDVKNVAQYVLSLSGAPHNEVAAQLGKAKFAVCAACHGPDGKGMQAVGSANLTDKIWLHGLRRTGHHRLINNGKTNIMPAQASRLSPEQIHVLGAYVWSLSQTSTVAAR</sequence>
<name>CCOP_RUBGE</name>
<keyword id="KW-0997">Cell inner membrane</keyword>
<keyword id="KW-1003">Cell membrane</keyword>
<keyword id="KW-0249">Electron transport</keyword>
<keyword id="KW-0349">Heme</keyword>
<keyword id="KW-0375">Hydrogen ion transport</keyword>
<keyword id="KW-0406">Ion transport</keyword>
<keyword id="KW-0408">Iron</keyword>
<keyword id="KW-0472">Membrane</keyword>
<keyword id="KW-0479">Metal-binding</keyword>
<keyword id="KW-0560">Oxidoreductase</keyword>
<keyword id="KW-0677">Repeat</keyword>
<keyword id="KW-0679">Respiratory chain</keyword>
<keyword id="KW-0812">Transmembrane</keyword>
<keyword id="KW-1133">Transmembrane helix</keyword>
<keyword id="KW-0813">Transport</keyword>
<feature type="chain" id="PRO_0000412294" description="Cbb3-type cytochrome c oxidase subunit CcoP">
    <location>
        <begin position="1"/>
        <end position="304"/>
    </location>
</feature>
<feature type="transmembrane region" description="Helical" evidence="6">
    <location>
        <begin position="11"/>
        <end position="31"/>
    </location>
</feature>
<feature type="transmembrane region" description="Helical" evidence="6">
    <location>
        <begin position="61"/>
        <end position="81"/>
    </location>
</feature>
<feature type="domain" description="Cytochrome c 1" evidence="7">
    <location>
        <begin position="129"/>
        <end position="209"/>
    </location>
</feature>
<feature type="domain" description="Cytochrome c 2" evidence="7">
    <location>
        <begin position="216"/>
        <end position="296"/>
    </location>
</feature>
<feature type="binding site" description="covalent" evidence="2">
    <location>
        <position position="142"/>
    </location>
    <ligand>
        <name>heme c</name>
        <dbReference type="ChEBI" id="CHEBI:61717"/>
        <label>1</label>
    </ligand>
</feature>
<feature type="binding site" description="covalent" evidence="2">
    <location>
        <position position="145"/>
    </location>
    <ligand>
        <name>heme c</name>
        <dbReference type="ChEBI" id="CHEBI:61717"/>
        <label>1</label>
    </ligand>
</feature>
<feature type="binding site" description="axial binding residue" evidence="2">
    <location>
        <position position="146"/>
    </location>
    <ligand>
        <name>heme c</name>
        <dbReference type="ChEBI" id="CHEBI:61717"/>
        <label>1</label>
    </ligand>
    <ligandPart>
        <name>Fe</name>
        <dbReference type="ChEBI" id="CHEBI:18248"/>
    </ligandPart>
</feature>
<feature type="binding site" description="axial binding residue" evidence="2">
    <location>
        <position position="185"/>
    </location>
    <ligand>
        <name>heme c</name>
        <dbReference type="ChEBI" id="CHEBI:61717"/>
        <label>2</label>
    </ligand>
    <ligandPart>
        <name>Fe</name>
        <dbReference type="ChEBI" id="CHEBI:18248"/>
    </ligandPart>
</feature>
<feature type="binding site" description="covalent" evidence="2">
    <location>
        <position position="228"/>
    </location>
    <ligand>
        <name>heme c</name>
        <dbReference type="ChEBI" id="CHEBI:61717"/>
        <label>2</label>
    </ligand>
</feature>
<feature type="binding site" description="covalent" evidence="2">
    <location>
        <position position="231"/>
    </location>
    <ligand>
        <name>heme c</name>
        <dbReference type="ChEBI" id="CHEBI:61717"/>
        <label>2</label>
    </ligand>
</feature>
<feature type="binding site" description="axial binding residue" evidence="2">
    <location>
        <position position="232"/>
    </location>
    <ligand>
        <name>heme c</name>
        <dbReference type="ChEBI" id="CHEBI:61717"/>
        <label>2</label>
    </ligand>
    <ligandPart>
        <name>Fe</name>
        <dbReference type="ChEBI" id="CHEBI:18248"/>
    </ligandPart>
</feature>
<feature type="binding site" description="axial binding residue" evidence="2">
    <location>
        <position position="273"/>
    </location>
    <ligand>
        <name>heme c</name>
        <dbReference type="ChEBI" id="CHEBI:61717"/>
        <label>1</label>
    </ligand>
    <ligandPart>
        <name>Fe</name>
        <dbReference type="ChEBI" id="CHEBI:18248"/>
    </ligandPart>
</feature>
<dbReference type="EMBL" id="AY648960">
    <property type="protein sequence ID" value="AAW66135.1"/>
    <property type="molecule type" value="Genomic_DNA"/>
</dbReference>
<dbReference type="SMR" id="Q5GCA5"/>
<dbReference type="BRENDA" id="7.1.1.9">
    <property type="organism ID" value="5401"/>
</dbReference>
<dbReference type="UniPathway" id="UPA00705"/>
<dbReference type="GO" id="GO:0005886">
    <property type="term" value="C:plasma membrane"/>
    <property type="evidence" value="ECO:0007669"/>
    <property type="project" value="UniProtKB-SubCell"/>
</dbReference>
<dbReference type="GO" id="GO:0009055">
    <property type="term" value="F:electron transfer activity"/>
    <property type="evidence" value="ECO:0007669"/>
    <property type="project" value="InterPro"/>
</dbReference>
<dbReference type="GO" id="GO:0020037">
    <property type="term" value="F:heme binding"/>
    <property type="evidence" value="ECO:0007669"/>
    <property type="project" value="InterPro"/>
</dbReference>
<dbReference type="GO" id="GO:0005506">
    <property type="term" value="F:iron ion binding"/>
    <property type="evidence" value="ECO:0007669"/>
    <property type="project" value="InterPro"/>
</dbReference>
<dbReference type="GO" id="GO:0016491">
    <property type="term" value="F:oxidoreductase activity"/>
    <property type="evidence" value="ECO:0007669"/>
    <property type="project" value="UniProtKB-KW"/>
</dbReference>
<dbReference type="GO" id="GO:0006119">
    <property type="term" value="P:oxidative phosphorylation"/>
    <property type="evidence" value="ECO:0007669"/>
    <property type="project" value="UniProtKB-UniPathway"/>
</dbReference>
<dbReference type="GO" id="GO:1902600">
    <property type="term" value="P:proton transmembrane transport"/>
    <property type="evidence" value="ECO:0007669"/>
    <property type="project" value="UniProtKB-KW"/>
</dbReference>
<dbReference type="Gene3D" id="6.10.280.130">
    <property type="match status" value="1"/>
</dbReference>
<dbReference type="Gene3D" id="1.10.760.10">
    <property type="entry name" value="Cytochrome c-like domain"/>
    <property type="match status" value="2"/>
</dbReference>
<dbReference type="InterPro" id="IPR032858">
    <property type="entry name" value="CcoP_N"/>
</dbReference>
<dbReference type="InterPro" id="IPR038414">
    <property type="entry name" value="CcoP_N_sf"/>
</dbReference>
<dbReference type="InterPro" id="IPR009056">
    <property type="entry name" value="Cyt_c-like_dom"/>
</dbReference>
<dbReference type="InterPro" id="IPR036909">
    <property type="entry name" value="Cyt_c-like_dom_sf"/>
</dbReference>
<dbReference type="InterPro" id="IPR008168">
    <property type="entry name" value="Cyt_C_IC"/>
</dbReference>
<dbReference type="InterPro" id="IPR004678">
    <property type="entry name" value="Cyt_c_oxidase_cbb3_su3"/>
</dbReference>
<dbReference type="InterPro" id="IPR050597">
    <property type="entry name" value="Cytochrome_c_Oxidase_Subunit"/>
</dbReference>
<dbReference type="NCBIfam" id="TIGR00782">
    <property type="entry name" value="ccoP"/>
    <property type="match status" value="1"/>
</dbReference>
<dbReference type="PANTHER" id="PTHR33751">
    <property type="entry name" value="CBB3-TYPE CYTOCHROME C OXIDASE SUBUNIT FIXP"/>
    <property type="match status" value="1"/>
</dbReference>
<dbReference type="PANTHER" id="PTHR33751:SF1">
    <property type="entry name" value="CBB3-TYPE CYTOCHROME C OXIDASE SUBUNIT FIXP"/>
    <property type="match status" value="1"/>
</dbReference>
<dbReference type="Pfam" id="PF13442">
    <property type="entry name" value="Cytochrome_CBB3"/>
    <property type="match status" value="2"/>
</dbReference>
<dbReference type="Pfam" id="PF14715">
    <property type="entry name" value="FixP_N"/>
    <property type="match status" value="1"/>
</dbReference>
<dbReference type="PIRSF" id="PIRSF000006">
    <property type="entry name" value="Cbb3-Cox_fixP"/>
    <property type="match status" value="1"/>
</dbReference>
<dbReference type="PRINTS" id="PR00605">
    <property type="entry name" value="CYTCHROMECIC"/>
</dbReference>
<dbReference type="SUPFAM" id="SSF46626">
    <property type="entry name" value="Cytochrome c"/>
    <property type="match status" value="2"/>
</dbReference>
<dbReference type="PROSITE" id="PS51007">
    <property type="entry name" value="CYTC"/>
    <property type="match status" value="2"/>
</dbReference>
<proteinExistence type="evidence at protein level"/>
<accession>Q5GCA5</accession>
<protein>
    <recommendedName>
        <fullName evidence="1">Cbb3-type cytochrome c oxidase subunit CcoP</fullName>
        <shortName evidence="1">Cbb3-Cox subunit CcoP</shortName>
    </recommendedName>
    <alternativeName>
        <fullName evidence="4">C-type cytochrome CcoP</fullName>
        <shortName evidence="1">Cyt c(P)</shortName>
    </alternativeName>
    <alternativeName>
        <fullName evidence="11">Cytochrome c oxidase subunit III</fullName>
    </alternativeName>
</protein>
<organism>
    <name type="scientific">Rubrivivax gelatinosus</name>
    <name type="common">Rhodocyclus gelatinosus</name>
    <name type="synonym">Rhodopseudomonas gelatinosa</name>
    <dbReference type="NCBI Taxonomy" id="28068"/>
    <lineage>
        <taxon>Bacteria</taxon>
        <taxon>Pseudomonadati</taxon>
        <taxon>Pseudomonadota</taxon>
        <taxon>Betaproteobacteria</taxon>
        <taxon>Burkholderiales</taxon>
        <taxon>Sphaerotilaceae</taxon>
        <taxon>Rubrivivax</taxon>
    </lineage>
</organism>
<comment type="function">
    <text evidence="1 2 3">C-type cytochrome. Part of the cbb3-type cytochrome c oxidase complex. CcoP subunit is required for transferring electrons from donor cytochrome c via its heme groups to CcoO subunit. From there, electrons are shuttled to the catalytic binuclear center of CcoN subunit where oxygen reduction takes place. The complex also functions as a proton pump (By similarity).</text>
</comment>
<comment type="cofactor">
    <cofactor evidence="2 8 9">
        <name>heme c</name>
        <dbReference type="ChEBI" id="CHEBI:61717"/>
    </cofactor>
    <text evidence="2 8 9">Binds 2 heme C groups per subunit.</text>
</comment>
<comment type="pathway">
    <text evidence="1">Energy metabolism; oxidative phosphorylation.</text>
</comment>
<comment type="subunit">
    <text evidence="1">Component of the cbb3-type cytochrome c oxidase at least composed of CcoN, CcoO, CcoQ and CcoP.</text>
</comment>
<comment type="subcellular location">
    <subcellularLocation>
        <location evidence="5 6">Cell inner membrane</location>
        <topology evidence="5 6">Multi-pass membrane protein</topology>
    </subcellularLocation>
</comment>
<comment type="similarity">
    <text evidence="10">Belongs to the CcoP / FixP family.</text>
</comment>
<reference evidence="10 11" key="1">
    <citation type="journal article" date="2007" name="J. Biol. Chem.">
        <title>Global regulation of photosynthesis and respiration by FnrL: the first two targets in the tetrapyrrole pathway.</title>
        <authorList>
            <person name="Ouchane S."/>
            <person name="Picaud M."/>
            <person name="Therizols P."/>
            <person name="Reiss-Husson F."/>
            <person name="Astier C."/>
        </authorList>
    </citation>
    <scope>NUCLEOTIDE SEQUENCE [GENOMIC DNA]</scope>
    <scope>COFACTOR</scope>
    <source>
        <strain evidence="11">1</strain>
    </source>
</reference>
<reference evidence="10 11" key="2">
    <citation type="journal article" date="2010" name="J. Biol. Chem.">
        <title>CtpA, a copper-translocating P-type ATPase involved in the biogenesis of multiple copper-requiring enzymes.</title>
        <authorList>
            <person name="Hassani B.K."/>
            <person name="Astier C."/>
            <person name="Nitschke W."/>
            <person name="Ouchane S."/>
        </authorList>
    </citation>
    <scope>NUCLEOTIDE SEQUENCE [GENOMIC DNA]</scope>
    <scope>CATALYTIC ACTIVITY OF THE CYTOCHROME C OXIDASE COMPLEX</scope>
    <scope>COFACTOR</scope>
    <source>
        <strain evidence="11">1</strain>
    </source>
</reference>
<reference evidence="10 11" key="3">
    <citation type="journal article" date="2010" name="J. Biol. Chem.">
        <title>Adaptation to oxygen: role of terminal oxidases in photosynthesis initiation in the purple photosynthetic bacterium, Rubrivivax gelatinosus.</title>
        <authorList>
            <person name="Hassani B.K."/>
            <person name="Steunou A.S."/>
            <person name="Liotenberg S."/>
            <person name="Reiss-Husson F."/>
            <person name="Astier C."/>
            <person name="Ouchane S."/>
        </authorList>
    </citation>
    <scope>NUCLEOTIDE SEQUENCE [GENOMIC DNA]</scope>
    <scope>CATALYTIC ACTIVITY OF THE CYTOCHROME C OXIDASE COMPLEX</scope>
    <source>
        <strain evidence="11">1</strain>
    </source>
</reference>